<feature type="chain" id="PRO_1000081352" description="Malate dehydrogenase">
    <location>
        <begin position="1"/>
        <end position="312"/>
    </location>
</feature>
<feature type="active site" description="Proton acceptor" evidence="1">
    <location>
        <position position="180"/>
    </location>
</feature>
<feature type="binding site" evidence="1">
    <location>
        <begin position="12"/>
        <end position="17"/>
    </location>
    <ligand>
        <name>NAD(+)</name>
        <dbReference type="ChEBI" id="CHEBI:57540"/>
    </ligand>
</feature>
<feature type="binding site" evidence="1">
    <location>
        <position position="36"/>
    </location>
    <ligand>
        <name>NAD(+)</name>
        <dbReference type="ChEBI" id="CHEBI:57540"/>
    </ligand>
</feature>
<feature type="binding site" evidence="1">
    <location>
        <position position="87"/>
    </location>
    <ligand>
        <name>substrate</name>
    </ligand>
</feature>
<feature type="binding site" evidence="1">
    <location>
        <position position="93"/>
    </location>
    <ligand>
        <name>substrate</name>
    </ligand>
</feature>
<feature type="binding site" evidence="1">
    <location>
        <position position="100"/>
    </location>
    <ligand>
        <name>NAD(+)</name>
        <dbReference type="ChEBI" id="CHEBI:57540"/>
    </ligand>
</feature>
<feature type="binding site" evidence="1">
    <location>
        <begin position="123"/>
        <end position="125"/>
    </location>
    <ligand>
        <name>NAD(+)</name>
        <dbReference type="ChEBI" id="CHEBI:57540"/>
    </ligand>
</feature>
<feature type="binding site" evidence="1">
    <location>
        <position position="125"/>
    </location>
    <ligand>
        <name>substrate</name>
    </ligand>
</feature>
<feature type="binding site" evidence="1">
    <location>
        <position position="156"/>
    </location>
    <ligand>
        <name>substrate</name>
    </ligand>
</feature>
<feature type="modified residue" description="Phosphoserine" evidence="1">
    <location>
        <position position="149"/>
    </location>
</feature>
<accession>A7GTN7</accession>
<organism>
    <name type="scientific">Bacillus cytotoxicus (strain DSM 22905 / CIP 110041 / 391-98 / NVH 391-98)</name>
    <dbReference type="NCBI Taxonomy" id="315749"/>
    <lineage>
        <taxon>Bacteria</taxon>
        <taxon>Bacillati</taxon>
        <taxon>Bacillota</taxon>
        <taxon>Bacilli</taxon>
        <taxon>Bacillales</taxon>
        <taxon>Bacillaceae</taxon>
        <taxon>Bacillus</taxon>
        <taxon>Bacillus cereus group</taxon>
    </lineage>
</organism>
<dbReference type="EC" id="1.1.1.37" evidence="1"/>
<dbReference type="EMBL" id="CP000764">
    <property type="protein sequence ID" value="ABS23495.1"/>
    <property type="molecule type" value="Genomic_DNA"/>
</dbReference>
<dbReference type="RefSeq" id="WP_012095736.1">
    <property type="nucleotide sequence ID" value="NC_009674.1"/>
</dbReference>
<dbReference type="SMR" id="A7GTN7"/>
<dbReference type="STRING" id="315749.Bcer98_3276"/>
<dbReference type="GeneID" id="33898521"/>
<dbReference type="KEGG" id="bcy:Bcer98_3276"/>
<dbReference type="eggNOG" id="COG0039">
    <property type="taxonomic scope" value="Bacteria"/>
</dbReference>
<dbReference type="HOGENOM" id="CLU_045401_2_1_9"/>
<dbReference type="OrthoDB" id="9802969at2"/>
<dbReference type="Proteomes" id="UP000002300">
    <property type="component" value="Chromosome"/>
</dbReference>
<dbReference type="GO" id="GO:0004459">
    <property type="term" value="F:L-lactate dehydrogenase activity"/>
    <property type="evidence" value="ECO:0007669"/>
    <property type="project" value="TreeGrafter"/>
</dbReference>
<dbReference type="GO" id="GO:0030060">
    <property type="term" value="F:L-malate dehydrogenase (NAD+) activity"/>
    <property type="evidence" value="ECO:0007669"/>
    <property type="project" value="UniProtKB-UniRule"/>
</dbReference>
<dbReference type="GO" id="GO:0006089">
    <property type="term" value="P:lactate metabolic process"/>
    <property type="evidence" value="ECO:0007669"/>
    <property type="project" value="TreeGrafter"/>
</dbReference>
<dbReference type="GO" id="GO:0006099">
    <property type="term" value="P:tricarboxylic acid cycle"/>
    <property type="evidence" value="ECO:0007669"/>
    <property type="project" value="UniProtKB-UniRule"/>
</dbReference>
<dbReference type="CDD" id="cd01339">
    <property type="entry name" value="LDH-like_MDH"/>
    <property type="match status" value="1"/>
</dbReference>
<dbReference type="FunFam" id="3.40.50.720:FF:000018">
    <property type="entry name" value="Malate dehydrogenase"/>
    <property type="match status" value="1"/>
</dbReference>
<dbReference type="FunFam" id="3.90.110.10:FF:000004">
    <property type="entry name" value="Malate dehydrogenase"/>
    <property type="match status" value="1"/>
</dbReference>
<dbReference type="Gene3D" id="3.90.110.10">
    <property type="entry name" value="Lactate dehydrogenase/glycoside hydrolase, family 4, C-terminal"/>
    <property type="match status" value="1"/>
</dbReference>
<dbReference type="Gene3D" id="3.40.50.720">
    <property type="entry name" value="NAD(P)-binding Rossmann-like Domain"/>
    <property type="match status" value="1"/>
</dbReference>
<dbReference type="HAMAP" id="MF_00487">
    <property type="entry name" value="Malate_dehydrog_3"/>
    <property type="match status" value="1"/>
</dbReference>
<dbReference type="InterPro" id="IPR001557">
    <property type="entry name" value="L-lactate/malate_DH"/>
</dbReference>
<dbReference type="InterPro" id="IPR022383">
    <property type="entry name" value="Lactate/malate_DH_C"/>
</dbReference>
<dbReference type="InterPro" id="IPR001236">
    <property type="entry name" value="Lactate/malate_DH_N"/>
</dbReference>
<dbReference type="InterPro" id="IPR015955">
    <property type="entry name" value="Lactate_DH/Glyco_Ohase_4_C"/>
</dbReference>
<dbReference type="InterPro" id="IPR011275">
    <property type="entry name" value="Malate_DH_type3"/>
</dbReference>
<dbReference type="InterPro" id="IPR036291">
    <property type="entry name" value="NAD(P)-bd_dom_sf"/>
</dbReference>
<dbReference type="NCBIfam" id="TIGR01763">
    <property type="entry name" value="MalateDH_bact"/>
    <property type="match status" value="1"/>
</dbReference>
<dbReference type="NCBIfam" id="NF004863">
    <property type="entry name" value="PRK06223.1"/>
    <property type="match status" value="1"/>
</dbReference>
<dbReference type="PANTHER" id="PTHR43128">
    <property type="entry name" value="L-2-HYDROXYCARBOXYLATE DEHYDROGENASE (NAD(P)(+))"/>
    <property type="match status" value="1"/>
</dbReference>
<dbReference type="PANTHER" id="PTHR43128:SF16">
    <property type="entry name" value="L-LACTATE DEHYDROGENASE"/>
    <property type="match status" value="1"/>
</dbReference>
<dbReference type="Pfam" id="PF02866">
    <property type="entry name" value="Ldh_1_C"/>
    <property type="match status" value="1"/>
</dbReference>
<dbReference type="Pfam" id="PF00056">
    <property type="entry name" value="Ldh_1_N"/>
    <property type="match status" value="1"/>
</dbReference>
<dbReference type="PIRSF" id="PIRSF000102">
    <property type="entry name" value="Lac_mal_DH"/>
    <property type="match status" value="1"/>
</dbReference>
<dbReference type="PRINTS" id="PR00086">
    <property type="entry name" value="LLDHDRGNASE"/>
</dbReference>
<dbReference type="SUPFAM" id="SSF56327">
    <property type="entry name" value="LDH C-terminal domain-like"/>
    <property type="match status" value="1"/>
</dbReference>
<dbReference type="SUPFAM" id="SSF51735">
    <property type="entry name" value="NAD(P)-binding Rossmann-fold domains"/>
    <property type="match status" value="1"/>
</dbReference>
<reference key="1">
    <citation type="journal article" date="2008" name="Chem. Biol. Interact.">
        <title>Extending the Bacillus cereus group genomics to putative food-borne pathogens of different toxicity.</title>
        <authorList>
            <person name="Lapidus A."/>
            <person name="Goltsman E."/>
            <person name="Auger S."/>
            <person name="Galleron N."/>
            <person name="Segurens B."/>
            <person name="Dossat C."/>
            <person name="Land M.L."/>
            <person name="Broussolle V."/>
            <person name="Brillard J."/>
            <person name="Guinebretiere M.-H."/>
            <person name="Sanchis V."/>
            <person name="Nguen-the C."/>
            <person name="Lereclus D."/>
            <person name="Richardson P."/>
            <person name="Wincker P."/>
            <person name="Weissenbach J."/>
            <person name="Ehrlich S.D."/>
            <person name="Sorokin A."/>
        </authorList>
    </citation>
    <scope>NUCLEOTIDE SEQUENCE [LARGE SCALE GENOMIC DNA]</scope>
    <source>
        <strain>DSM 22905 / CIP 110041 / 391-98 / NVH 391-98</strain>
    </source>
</reference>
<keyword id="KW-0520">NAD</keyword>
<keyword id="KW-0560">Oxidoreductase</keyword>
<keyword id="KW-0597">Phosphoprotein</keyword>
<keyword id="KW-0816">Tricarboxylic acid cycle</keyword>
<comment type="function">
    <text evidence="1">Catalyzes the reversible oxidation of malate to oxaloacetate.</text>
</comment>
<comment type="catalytic activity">
    <reaction evidence="1">
        <text>(S)-malate + NAD(+) = oxaloacetate + NADH + H(+)</text>
        <dbReference type="Rhea" id="RHEA:21432"/>
        <dbReference type="ChEBI" id="CHEBI:15378"/>
        <dbReference type="ChEBI" id="CHEBI:15589"/>
        <dbReference type="ChEBI" id="CHEBI:16452"/>
        <dbReference type="ChEBI" id="CHEBI:57540"/>
        <dbReference type="ChEBI" id="CHEBI:57945"/>
        <dbReference type="EC" id="1.1.1.37"/>
    </reaction>
</comment>
<comment type="similarity">
    <text evidence="1">Belongs to the LDH/MDH superfamily. MDH type 3 family.</text>
</comment>
<protein>
    <recommendedName>
        <fullName evidence="1">Malate dehydrogenase</fullName>
        <ecNumber evidence="1">1.1.1.37</ecNumber>
    </recommendedName>
</protein>
<name>MDH_BACCN</name>
<sequence>MTIKRKKVSVIGAGFTGATTAFLLAQKELADVVLVDIPQLENPTKGKALDMLEASPVQGFDANIIGTSDYADTADSDVVIITAGIARKPGMSRDDLVATNSKIMKSVTKEIAKHSPDTIIIVLTNPVDAMTYSVFKEAGFPKERVIGQSGVLDTARFRTFIAQELNLSVKDITGFVLGGHGDDMVPLVRYSYAGGIPLETLISKERLDAIVERTRKGGGEIVNLLGNGSAYYAPAASLVEMTEAILKDQRRVLPAIAYLEGEYGYRDLYLGVPVILGGNGIEKVIELELREEEKMALDRSVESVRNVMEILS</sequence>
<gene>
    <name evidence="1" type="primary">mdh</name>
    <name type="ordered locus">Bcer98_3276</name>
</gene>
<evidence type="ECO:0000255" key="1">
    <source>
        <dbReference type="HAMAP-Rule" id="MF_00487"/>
    </source>
</evidence>
<proteinExistence type="inferred from homology"/>